<evidence type="ECO:0000255" key="1">
    <source>
        <dbReference type="HAMAP-Rule" id="MF_00335"/>
    </source>
</evidence>
<evidence type="ECO:0000255" key="2">
    <source>
        <dbReference type="PROSITE-ProRule" id="PRU01175"/>
    </source>
</evidence>
<evidence type="ECO:0000256" key="3">
    <source>
        <dbReference type="SAM" id="MobiDB-lite"/>
    </source>
</evidence>
<name>RNY_LISIN</name>
<keyword id="KW-1003">Cell membrane</keyword>
<keyword id="KW-0255">Endonuclease</keyword>
<keyword id="KW-0378">Hydrolase</keyword>
<keyword id="KW-0472">Membrane</keyword>
<keyword id="KW-0540">Nuclease</keyword>
<keyword id="KW-0694">RNA-binding</keyword>
<keyword id="KW-0812">Transmembrane</keyword>
<keyword id="KW-1133">Transmembrane helix</keyword>
<dbReference type="EC" id="3.1.-.-" evidence="1"/>
<dbReference type="EMBL" id="AL596168">
    <property type="protein sequence ID" value="CAC96667.1"/>
    <property type="molecule type" value="Genomic_DNA"/>
</dbReference>
<dbReference type="PIR" id="AC1612">
    <property type="entry name" value="AC1612"/>
</dbReference>
<dbReference type="RefSeq" id="WP_003721904.1">
    <property type="nucleotide sequence ID" value="NC_003212.1"/>
</dbReference>
<dbReference type="SMR" id="P0A4Q7"/>
<dbReference type="STRING" id="272626.gene:17565767"/>
<dbReference type="GeneID" id="93239276"/>
<dbReference type="KEGG" id="lin:lin1436"/>
<dbReference type="eggNOG" id="COG1418">
    <property type="taxonomic scope" value="Bacteria"/>
</dbReference>
<dbReference type="HOGENOM" id="CLU_028328_1_0_9"/>
<dbReference type="OrthoDB" id="9803205at2"/>
<dbReference type="Proteomes" id="UP000002513">
    <property type="component" value="Chromosome"/>
</dbReference>
<dbReference type="GO" id="GO:0005886">
    <property type="term" value="C:plasma membrane"/>
    <property type="evidence" value="ECO:0007669"/>
    <property type="project" value="UniProtKB-SubCell"/>
</dbReference>
<dbReference type="GO" id="GO:0003723">
    <property type="term" value="F:RNA binding"/>
    <property type="evidence" value="ECO:0007669"/>
    <property type="project" value="UniProtKB-UniRule"/>
</dbReference>
<dbReference type="GO" id="GO:0004521">
    <property type="term" value="F:RNA endonuclease activity"/>
    <property type="evidence" value="ECO:0007669"/>
    <property type="project" value="UniProtKB-UniRule"/>
</dbReference>
<dbReference type="GO" id="GO:0006402">
    <property type="term" value="P:mRNA catabolic process"/>
    <property type="evidence" value="ECO:0007669"/>
    <property type="project" value="UniProtKB-UniRule"/>
</dbReference>
<dbReference type="CDD" id="cd00077">
    <property type="entry name" value="HDc"/>
    <property type="match status" value="1"/>
</dbReference>
<dbReference type="CDD" id="cd22431">
    <property type="entry name" value="KH-I_RNaseY"/>
    <property type="match status" value="1"/>
</dbReference>
<dbReference type="FunFam" id="1.10.3210.10:FF:000003">
    <property type="entry name" value="Ribonuclease Y"/>
    <property type="match status" value="1"/>
</dbReference>
<dbReference type="FunFam" id="3.30.1370.10:FF:000006">
    <property type="entry name" value="Ribonuclease Y"/>
    <property type="match status" value="1"/>
</dbReference>
<dbReference type="Gene3D" id="1.10.3210.10">
    <property type="entry name" value="Hypothetical protein af1432"/>
    <property type="match status" value="1"/>
</dbReference>
<dbReference type="Gene3D" id="3.30.1370.10">
    <property type="entry name" value="K Homology domain, type 1"/>
    <property type="match status" value="1"/>
</dbReference>
<dbReference type="HAMAP" id="MF_00335">
    <property type="entry name" value="RNase_Y"/>
    <property type="match status" value="1"/>
</dbReference>
<dbReference type="InterPro" id="IPR003607">
    <property type="entry name" value="HD/PDEase_dom"/>
</dbReference>
<dbReference type="InterPro" id="IPR006674">
    <property type="entry name" value="HD_domain"/>
</dbReference>
<dbReference type="InterPro" id="IPR006675">
    <property type="entry name" value="HDIG_dom"/>
</dbReference>
<dbReference type="InterPro" id="IPR004087">
    <property type="entry name" value="KH_dom"/>
</dbReference>
<dbReference type="InterPro" id="IPR004088">
    <property type="entry name" value="KH_dom_type_1"/>
</dbReference>
<dbReference type="InterPro" id="IPR036612">
    <property type="entry name" value="KH_dom_type_1_sf"/>
</dbReference>
<dbReference type="InterPro" id="IPR017705">
    <property type="entry name" value="Ribonuclease_Y"/>
</dbReference>
<dbReference type="InterPro" id="IPR022711">
    <property type="entry name" value="RNase_Y_N"/>
</dbReference>
<dbReference type="NCBIfam" id="TIGR00277">
    <property type="entry name" value="HDIG"/>
    <property type="match status" value="1"/>
</dbReference>
<dbReference type="NCBIfam" id="TIGR03319">
    <property type="entry name" value="RNase_Y"/>
    <property type="match status" value="1"/>
</dbReference>
<dbReference type="PANTHER" id="PTHR12826">
    <property type="entry name" value="RIBONUCLEASE Y"/>
    <property type="match status" value="1"/>
</dbReference>
<dbReference type="PANTHER" id="PTHR12826:SF15">
    <property type="entry name" value="RIBONUCLEASE Y"/>
    <property type="match status" value="1"/>
</dbReference>
<dbReference type="Pfam" id="PF01966">
    <property type="entry name" value="HD"/>
    <property type="match status" value="1"/>
</dbReference>
<dbReference type="Pfam" id="PF00013">
    <property type="entry name" value="KH_1"/>
    <property type="match status" value="1"/>
</dbReference>
<dbReference type="Pfam" id="PF12072">
    <property type="entry name" value="RNase_Y_N"/>
    <property type="match status" value="1"/>
</dbReference>
<dbReference type="SMART" id="SM00471">
    <property type="entry name" value="HDc"/>
    <property type="match status" value="1"/>
</dbReference>
<dbReference type="SMART" id="SM00322">
    <property type="entry name" value="KH"/>
    <property type="match status" value="1"/>
</dbReference>
<dbReference type="SUPFAM" id="SSF54791">
    <property type="entry name" value="Eukaryotic type KH-domain (KH-domain type I)"/>
    <property type="match status" value="1"/>
</dbReference>
<dbReference type="SUPFAM" id="SSF109604">
    <property type="entry name" value="HD-domain/PDEase-like"/>
    <property type="match status" value="1"/>
</dbReference>
<dbReference type="PROSITE" id="PS51831">
    <property type="entry name" value="HD"/>
    <property type="match status" value="1"/>
</dbReference>
<dbReference type="PROSITE" id="PS50084">
    <property type="entry name" value="KH_TYPE_1"/>
    <property type="match status" value="1"/>
</dbReference>
<accession>P0A4Q7</accession>
<accession>Q9L738</accession>
<sequence length="520" mass="58318">MTIAITIISSLLFLIVGLVVGSLIFKSSTEKKLAAARGTAELIVEDAKKEAETTKKEALLEAKEENHRLRTEIENELRGRRTETQKAENRLLQREENLDRKDTSLSKREATLERKEESISKRQQQIEEKESKLAEMIQAEQTELERISALSKEEAKSIILNQVEEELTHDTAIMVKESENRAKEESDKKAKNILSLAIQRCAADHVAETTVSVVTLPNDEMKGRIIGREGRNIRTLETLTGIDLIIDDTPEAVILSGFDPIRREIARIALEKLVQDGRIHPARIEEMVDKARKEVDEHIREVGEQATFEVGIHSIHPDLIKILGRLRYRTSYGQNVLNHSLEVSKLAGILAGELGEDVTLAKRAGLLHDIGKAIDHEIEGSHVEIGVELATKYKENDVVINSIASHHGDTEATSVIAVLVAAADALSAARPGARSETLENYIRRLEKLEEISESYDGVEKSYAIQAGREVRIIVEPDTIDDLSSYRLARDIRKRIEEELDYPGHIKVTVIRETRAVEYAK</sequence>
<reference key="1">
    <citation type="journal article" date="2001" name="Science">
        <title>Comparative genomics of Listeria species.</title>
        <authorList>
            <person name="Glaser P."/>
            <person name="Frangeul L."/>
            <person name="Buchrieser C."/>
            <person name="Rusniok C."/>
            <person name="Amend A."/>
            <person name="Baquero F."/>
            <person name="Berche P."/>
            <person name="Bloecker H."/>
            <person name="Brandt P."/>
            <person name="Chakraborty T."/>
            <person name="Charbit A."/>
            <person name="Chetouani F."/>
            <person name="Couve E."/>
            <person name="de Daruvar A."/>
            <person name="Dehoux P."/>
            <person name="Domann E."/>
            <person name="Dominguez-Bernal G."/>
            <person name="Duchaud E."/>
            <person name="Durant L."/>
            <person name="Dussurget O."/>
            <person name="Entian K.-D."/>
            <person name="Fsihi H."/>
            <person name="Garcia-del Portillo F."/>
            <person name="Garrido P."/>
            <person name="Gautier L."/>
            <person name="Goebel W."/>
            <person name="Gomez-Lopez N."/>
            <person name="Hain T."/>
            <person name="Hauf J."/>
            <person name="Jackson D."/>
            <person name="Jones L.-M."/>
            <person name="Kaerst U."/>
            <person name="Kreft J."/>
            <person name="Kuhn M."/>
            <person name="Kunst F."/>
            <person name="Kurapkat G."/>
            <person name="Madueno E."/>
            <person name="Maitournam A."/>
            <person name="Mata Vicente J."/>
            <person name="Ng E."/>
            <person name="Nedjari H."/>
            <person name="Nordsiek G."/>
            <person name="Novella S."/>
            <person name="de Pablos B."/>
            <person name="Perez-Diaz J.-C."/>
            <person name="Purcell R."/>
            <person name="Remmel B."/>
            <person name="Rose M."/>
            <person name="Schlueter T."/>
            <person name="Simoes N."/>
            <person name="Tierrez A."/>
            <person name="Vazquez-Boland J.-A."/>
            <person name="Voss H."/>
            <person name="Wehland J."/>
            <person name="Cossart P."/>
        </authorList>
    </citation>
    <scope>NUCLEOTIDE SEQUENCE [LARGE SCALE GENOMIC DNA]</scope>
    <source>
        <strain>ATCC BAA-680 / CLIP 11262</strain>
    </source>
</reference>
<gene>
    <name evidence="1" type="primary">rny</name>
    <name type="ordered locus">lin1436</name>
</gene>
<proteinExistence type="inferred from homology"/>
<feature type="chain" id="PRO_0000163778" description="Ribonuclease Y">
    <location>
        <begin position="1"/>
        <end position="520"/>
    </location>
</feature>
<feature type="transmembrane region" description="Helical" evidence="1">
    <location>
        <begin position="5"/>
        <end position="25"/>
    </location>
</feature>
<feature type="domain" description="KH" evidence="1">
    <location>
        <begin position="210"/>
        <end position="273"/>
    </location>
</feature>
<feature type="domain" description="HD" evidence="2">
    <location>
        <begin position="336"/>
        <end position="429"/>
    </location>
</feature>
<feature type="region of interest" description="Disordered" evidence="3">
    <location>
        <begin position="76"/>
        <end position="127"/>
    </location>
</feature>
<comment type="function">
    <text evidence="1">Endoribonuclease that initiates mRNA decay.</text>
</comment>
<comment type="subcellular location">
    <subcellularLocation>
        <location evidence="1">Cell membrane</location>
        <topology evidence="1">Single-pass membrane protein</topology>
    </subcellularLocation>
</comment>
<comment type="similarity">
    <text evidence="1">Belongs to the RNase Y family.</text>
</comment>
<organism>
    <name type="scientific">Listeria innocua serovar 6a (strain ATCC BAA-680 / CLIP 11262)</name>
    <dbReference type="NCBI Taxonomy" id="272626"/>
    <lineage>
        <taxon>Bacteria</taxon>
        <taxon>Bacillati</taxon>
        <taxon>Bacillota</taxon>
        <taxon>Bacilli</taxon>
        <taxon>Bacillales</taxon>
        <taxon>Listeriaceae</taxon>
        <taxon>Listeria</taxon>
    </lineage>
</organism>
<protein>
    <recommendedName>
        <fullName evidence="1">Ribonuclease Y</fullName>
        <shortName evidence="1">RNase Y</shortName>
        <ecNumber evidence="1">3.1.-.-</ecNumber>
    </recommendedName>
</protein>